<organism>
    <name type="scientific">Blochmanniella floridana</name>
    <dbReference type="NCBI Taxonomy" id="203907"/>
    <lineage>
        <taxon>Bacteria</taxon>
        <taxon>Pseudomonadati</taxon>
        <taxon>Pseudomonadota</taxon>
        <taxon>Gammaproteobacteria</taxon>
        <taxon>Enterobacterales</taxon>
        <taxon>Enterobacteriaceae</taxon>
        <taxon>ant endosymbionts</taxon>
        <taxon>Candidatus Blochmanniella</taxon>
    </lineage>
</organism>
<dbReference type="EC" id="1.1.1.85" evidence="1"/>
<dbReference type="EMBL" id="BX248583">
    <property type="protein sequence ID" value="CAD83653.1"/>
    <property type="molecule type" value="Genomic_DNA"/>
</dbReference>
<dbReference type="SMR" id="Q7VQJ7"/>
<dbReference type="STRING" id="203907.Bfl132"/>
<dbReference type="KEGG" id="bfl:Bfl132"/>
<dbReference type="eggNOG" id="COG0473">
    <property type="taxonomic scope" value="Bacteria"/>
</dbReference>
<dbReference type="HOGENOM" id="CLU_031953_0_3_6"/>
<dbReference type="OrthoDB" id="9767905at2"/>
<dbReference type="UniPathway" id="UPA00048">
    <property type="reaction ID" value="UER00072"/>
</dbReference>
<dbReference type="Proteomes" id="UP000002192">
    <property type="component" value="Chromosome"/>
</dbReference>
<dbReference type="GO" id="GO:0005829">
    <property type="term" value="C:cytosol"/>
    <property type="evidence" value="ECO:0007669"/>
    <property type="project" value="TreeGrafter"/>
</dbReference>
<dbReference type="GO" id="GO:0003862">
    <property type="term" value="F:3-isopropylmalate dehydrogenase activity"/>
    <property type="evidence" value="ECO:0007669"/>
    <property type="project" value="UniProtKB-UniRule"/>
</dbReference>
<dbReference type="GO" id="GO:0000287">
    <property type="term" value="F:magnesium ion binding"/>
    <property type="evidence" value="ECO:0007669"/>
    <property type="project" value="InterPro"/>
</dbReference>
<dbReference type="GO" id="GO:0051287">
    <property type="term" value="F:NAD binding"/>
    <property type="evidence" value="ECO:0007669"/>
    <property type="project" value="InterPro"/>
</dbReference>
<dbReference type="GO" id="GO:0009098">
    <property type="term" value="P:L-leucine biosynthetic process"/>
    <property type="evidence" value="ECO:0007669"/>
    <property type="project" value="UniProtKB-UniRule"/>
</dbReference>
<dbReference type="FunFam" id="3.40.718.10:FF:000006">
    <property type="entry name" value="3-isopropylmalate dehydrogenase"/>
    <property type="match status" value="1"/>
</dbReference>
<dbReference type="Gene3D" id="3.40.718.10">
    <property type="entry name" value="Isopropylmalate Dehydrogenase"/>
    <property type="match status" value="1"/>
</dbReference>
<dbReference type="HAMAP" id="MF_01033">
    <property type="entry name" value="LeuB_type1"/>
    <property type="match status" value="1"/>
</dbReference>
<dbReference type="InterPro" id="IPR019818">
    <property type="entry name" value="IsoCit/isopropylmalate_DH_CS"/>
</dbReference>
<dbReference type="InterPro" id="IPR024084">
    <property type="entry name" value="IsoPropMal-DH-like_dom"/>
</dbReference>
<dbReference type="InterPro" id="IPR004429">
    <property type="entry name" value="Isopropylmalate_DH"/>
</dbReference>
<dbReference type="NCBIfam" id="TIGR00169">
    <property type="entry name" value="leuB"/>
    <property type="match status" value="1"/>
</dbReference>
<dbReference type="PANTHER" id="PTHR42979">
    <property type="entry name" value="3-ISOPROPYLMALATE DEHYDROGENASE"/>
    <property type="match status" value="1"/>
</dbReference>
<dbReference type="PANTHER" id="PTHR42979:SF1">
    <property type="entry name" value="3-ISOPROPYLMALATE DEHYDROGENASE"/>
    <property type="match status" value="1"/>
</dbReference>
<dbReference type="Pfam" id="PF00180">
    <property type="entry name" value="Iso_dh"/>
    <property type="match status" value="1"/>
</dbReference>
<dbReference type="SMART" id="SM01329">
    <property type="entry name" value="Iso_dh"/>
    <property type="match status" value="1"/>
</dbReference>
<dbReference type="SUPFAM" id="SSF53659">
    <property type="entry name" value="Isocitrate/Isopropylmalate dehydrogenase-like"/>
    <property type="match status" value="1"/>
</dbReference>
<dbReference type="PROSITE" id="PS00470">
    <property type="entry name" value="IDH_IMDH"/>
    <property type="match status" value="1"/>
</dbReference>
<name>LEU3_BLOFL</name>
<gene>
    <name evidence="1" type="primary">leuB</name>
    <name type="ordered locus">Bfl132</name>
</gene>
<comment type="function">
    <text evidence="1">Catalyzes the oxidation of 3-carboxy-2-hydroxy-4-methylpentanoate (3-isopropylmalate) to 3-carboxy-4-methyl-2-oxopentanoate. The product decarboxylates to 4-methyl-2 oxopentanoate.</text>
</comment>
<comment type="catalytic activity">
    <reaction evidence="1">
        <text>(2R,3S)-3-isopropylmalate + NAD(+) = 4-methyl-2-oxopentanoate + CO2 + NADH</text>
        <dbReference type="Rhea" id="RHEA:32271"/>
        <dbReference type="ChEBI" id="CHEBI:16526"/>
        <dbReference type="ChEBI" id="CHEBI:17865"/>
        <dbReference type="ChEBI" id="CHEBI:35121"/>
        <dbReference type="ChEBI" id="CHEBI:57540"/>
        <dbReference type="ChEBI" id="CHEBI:57945"/>
        <dbReference type="EC" id="1.1.1.85"/>
    </reaction>
</comment>
<comment type="cofactor">
    <cofactor evidence="1">
        <name>Mg(2+)</name>
        <dbReference type="ChEBI" id="CHEBI:18420"/>
    </cofactor>
    <cofactor evidence="1">
        <name>Mn(2+)</name>
        <dbReference type="ChEBI" id="CHEBI:29035"/>
    </cofactor>
    <text evidence="1">Binds 1 Mg(2+) or Mn(2+) ion per subunit.</text>
</comment>
<comment type="pathway">
    <text evidence="1">Amino-acid biosynthesis; L-leucine biosynthesis; L-leucine from 3-methyl-2-oxobutanoate: step 3/4.</text>
</comment>
<comment type="subunit">
    <text evidence="1">Homodimer.</text>
</comment>
<comment type="subcellular location">
    <subcellularLocation>
        <location evidence="1">Cytoplasm</location>
    </subcellularLocation>
</comment>
<comment type="similarity">
    <text evidence="1">Belongs to the isocitrate and isopropylmalate dehydrogenases family. LeuB type 1 subfamily.</text>
</comment>
<feature type="chain" id="PRO_0000083647" description="3-isopropylmalate dehydrogenase">
    <location>
        <begin position="1"/>
        <end position="364"/>
    </location>
</feature>
<feature type="binding site" evidence="1">
    <location>
        <begin position="79"/>
        <end position="92"/>
    </location>
    <ligand>
        <name>NAD(+)</name>
        <dbReference type="ChEBI" id="CHEBI:57540"/>
    </ligand>
</feature>
<feature type="binding site" evidence="1">
    <location>
        <position position="100"/>
    </location>
    <ligand>
        <name>substrate</name>
    </ligand>
</feature>
<feature type="binding site" evidence="1">
    <location>
        <position position="110"/>
    </location>
    <ligand>
        <name>substrate</name>
    </ligand>
</feature>
<feature type="binding site" evidence="1">
    <location>
        <position position="139"/>
    </location>
    <ligand>
        <name>substrate</name>
    </ligand>
</feature>
<feature type="binding site" evidence="1">
    <location>
        <position position="228"/>
    </location>
    <ligand>
        <name>Mg(2+)</name>
        <dbReference type="ChEBI" id="CHEBI:18420"/>
    </ligand>
</feature>
<feature type="binding site" evidence="1">
    <location>
        <position position="228"/>
    </location>
    <ligand>
        <name>substrate</name>
    </ligand>
</feature>
<feature type="binding site" evidence="1">
    <location>
        <position position="252"/>
    </location>
    <ligand>
        <name>Mg(2+)</name>
        <dbReference type="ChEBI" id="CHEBI:18420"/>
    </ligand>
</feature>
<feature type="binding site" evidence="1">
    <location>
        <position position="256"/>
    </location>
    <ligand>
        <name>Mg(2+)</name>
        <dbReference type="ChEBI" id="CHEBI:18420"/>
    </ligand>
</feature>
<feature type="binding site" evidence="1">
    <location>
        <begin position="286"/>
        <end position="298"/>
    </location>
    <ligand>
        <name>NAD(+)</name>
        <dbReference type="ChEBI" id="CHEBI:57540"/>
    </ligand>
</feature>
<feature type="site" description="Important for catalysis" evidence="1">
    <location>
        <position position="146"/>
    </location>
</feature>
<feature type="site" description="Important for catalysis" evidence="1">
    <location>
        <position position="196"/>
    </location>
</feature>
<sequence length="364" mass="40485">MNNNTYHIAILPGDGIGPEIMQQAYKILNTVKNKFKINIITTEYKVGGNALDLEGSPLPKDTIKNCEKSNAILFGAVGGPKWNNINETSRPEFGALLTLRKHFNLFINLRPIYLPIELINLSPLKPEIISQGLDMICIRELIGGIYFGKPQGKSGIRSQEHAFDTAIYHRFEIERIAHFAFKLAQKRRKHVTSIDKANVLHTSMLWRKVVSEVASNYPNVHLQHLYVDNASMQLIRNPSAFDVILCPNLFGDILSDECAEINGSIGILPSASLNEHNFGLYEPAGGSAPDIAGKNIANPIAQILSTALLFRYSLKLNHVAITIEKAVYKALTLGYRTQDIAYNKQKSVNTDDMGDIIASLIYKL</sequence>
<reference key="1">
    <citation type="journal article" date="2003" name="Proc. Natl. Acad. Sci. U.S.A.">
        <title>The genome sequence of Blochmannia floridanus: comparative analysis of reduced genomes.</title>
        <authorList>
            <person name="Gil R."/>
            <person name="Silva F.J."/>
            <person name="Zientz E."/>
            <person name="Delmotte F."/>
            <person name="Gonzalez-Candelas F."/>
            <person name="Latorre A."/>
            <person name="Rausell C."/>
            <person name="Kamerbeek J."/>
            <person name="Gadau J."/>
            <person name="Hoelldobler B."/>
            <person name="van Ham R.C.H.J."/>
            <person name="Gross R."/>
            <person name="Moya A."/>
        </authorList>
    </citation>
    <scope>NUCLEOTIDE SEQUENCE [LARGE SCALE GENOMIC DNA]</scope>
</reference>
<proteinExistence type="inferred from homology"/>
<keyword id="KW-0028">Amino-acid biosynthesis</keyword>
<keyword id="KW-0100">Branched-chain amino acid biosynthesis</keyword>
<keyword id="KW-0963">Cytoplasm</keyword>
<keyword id="KW-0432">Leucine biosynthesis</keyword>
<keyword id="KW-0460">Magnesium</keyword>
<keyword id="KW-0464">Manganese</keyword>
<keyword id="KW-0479">Metal-binding</keyword>
<keyword id="KW-0520">NAD</keyword>
<keyword id="KW-0560">Oxidoreductase</keyword>
<keyword id="KW-1185">Reference proteome</keyword>
<evidence type="ECO:0000255" key="1">
    <source>
        <dbReference type="HAMAP-Rule" id="MF_01033"/>
    </source>
</evidence>
<protein>
    <recommendedName>
        <fullName evidence="1">3-isopropylmalate dehydrogenase</fullName>
        <ecNumber evidence="1">1.1.1.85</ecNumber>
    </recommendedName>
    <alternativeName>
        <fullName evidence="1">3-IPM-DH</fullName>
    </alternativeName>
    <alternativeName>
        <fullName evidence="1">Beta-IPM dehydrogenase</fullName>
        <shortName evidence="1">IMDH</shortName>
    </alternativeName>
</protein>
<accession>Q7VQJ7</accession>